<name>KEFF_ECO57</name>
<gene>
    <name evidence="1" type="primary">kefF</name>
    <name type="ordered locus">Z0052</name>
    <name type="ordered locus">ECs0049</name>
</gene>
<comment type="function">
    <text evidence="1">Regulatory subunit of a potassium efflux system that confers protection against electrophiles. Required for full activity of KefC. Shows redox enzymatic activity, but this enzymatic activity is not required for activation of KefC.</text>
</comment>
<comment type="catalytic activity">
    <reaction evidence="1">
        <text>a quinone + NADH + H(+) = a quinol + NAD(+)</text>
        <dbReference type="Rhea" id="RHEA:46160"/>
        <dbReference type="ChEBI" id="CHEBI:15378"/>
        <dbReference type="ChEBI" id="CHEBI:24646"/>
        <dbReference type="ChEBI" id="CHEBI:57540"/>
        <dbReference type="ChEBI" id="CHEBI:57945"/>
        <dbReference type="ChEBI" id="CHEBI:132124"/>
        <dbReference type="EC" id="1.6.5.2"/>
    </reaction>
</comment>
<comment type="catalytic activity">
    <reaction evidence="1">
        <text>a quinone + NADPH + H(+) = a quinol + NADP(+)</text>
        <dbReference type="Rhea" id="RHEA:46164"/>
        <dbReference type="ChEBI" id="CHEBI:15378"/>
        <dbReference type="ChEBI" id="CHEBI:24646"/>
        <dbReference type="ChEBI" id="CHEBI:57783"/>
        <dbReference type="ChEBI" id="CHEBI:58349"/>
        <dbReference type="ChEBI" id="CHEBI:132124"/>
        <dbReference type="EC" id="1.6.5.2"/>
    </reaction>
</comment>
<comment type="cofactor">
    <cofactor evidence="1">
        <name>FMN</name>
        <dbReference type="ChEBI" id="CHEBI:58210"/>
    </cofactor>
</comment>
<comment type="subunit">
    <text evidence="1">Homodimer. Interacts with KefC.</text>
</comment>
<comment type="subcellular location">
    <subcellularLocation>
        <location evidence="1">Cell inner membrane</location>
        <topology evidence="1">Peripheral membrane protein</topology>
        <orientation evidence="1">Cytoplasmic side</orientation>
    </subcellularLocation>
</comment>
<comment type="similarity">
    <text evidence="1">Belongs to the NAD(P)H dehydrogenase (quinone) family. KefF subfamily.</text>
</comment>
<dbReference type="EC" id="1.6.5.2" evidence="1"/>
<dbReference type="EMBL" id="AE005174">
    <property type="protein sequence ID" value="AAG54349.1"/>
    <property type="molecule type" value="Genomic_DNA"/>
</dbReference>
<dbReference type="EMBL" id="BA000007">
    <property type="protein sequence ID" value="BAB33472.1"/>
    <property type="molecule type" value="Genomic_DNA"/>
</dbReference>
<dbReference type="PIR" id="A85486">
    <property type="entry name" value="A85486"/>
</dbReference>
<dbReference type="PIR" id="A90635">
    <property type="entry name" value="A90635"/>
</dbReference>
<dbReference type="RefSeq" id="NP_308076.1">
    <property type="nucleotide sequence ID" value="NC_002695.1"/>
</dbReference>
<dbReference type="RefSeq" id="WP_000600700.1">
    <property type="nucleotide sequence ID" value="NZ_VOAI01000002.1"/>
</dbReference>
<dbReference type="SMR" id="Q8XA24"/>
<dbReference type="STRING" id="155864.Z0052"/>
<dbReference type="GeneID" id="913448"/>
<dbReference type="KEGG" id="ece:Z0052"/>
<dbReference type="KEGG" id="ecs:ECs_0049"/>
<dbReference type="PATRIC" id="fig|386585.9.peg.148"/>
<dbReference type="eggNOG" id="COG2249">
    <property type="taxonomic scope" value="Bacteria"/>
</dbReference>
<dbReference type="HOGENOM" id="CLU_058643_0_2_6"/>
<dbReference type="OMA" id="IWQHPMQ"/>
<dbReference type="Proteomes" id="UP000000558">
    <property type="component" value="Chromosome"/>
</dbReference>
<dbReference type="Proteomes" id="UP000002519">
    <property type="component" value="Chromosome"/>
</dbReference>
<dbReference type="GO" id="GO:0005886">
    <property type="term" value="C:plasma membrane"/>
    <property type="evidence" value="ECO:0007669"/>
    <property type="project" value="UniProtKB-SubCell"/>
</dbReference>
<dbReference type="GO" id="GO:0009055">
    <property type="term" value="F:electron transfer activity"/>
    <property type="evidence" value="ECO:0007669"/>
    <property type="project" value="TreeGrafter"/>
</dbReference>
<dbReference type="GO" id="GO:0010181">
    <property type="term" value="F:FMN binding"/>
    <property type="evidence" value="ECO:0007669"/>
    <property type="project" value="UniProtKB-UniRule"/>
</dbReference>
<dbReference type="GO" id="GO:0050136">
    <property type="term" value="F:NADH:ubiquinone reductase (non-electrogenic) activity"/>
    <property type="evidence" value="ECO:0007669"/>
    <property type="project" value="RHEA"/>
</dbReference>
<dbReference type="GO" id="GO:0008753">
    <property type="term" value="F:NADPH dehydrogenase (quinone) activity"/>
    <property type="evidence" value="ECO:0007669"/>
    <property type="project" value="RHEA"/>
</dbReference>
<dbReference type="GO" id="GO:1901381">
    <property type="term" value="P:positive regulation of potassium ion transmembrane transport"/>
    <property type="evidence" value="ECO:0007669"/>
    <property type="project" value="UniProtKB-UniRule"/>
</dbReference>
<dbReference type="GO" id="GO:0006813">
    <property type="term" value="P:potassium ion transport"/>
    <property type="evidence" value="ECO:0007669"/>
    <property type="project" value="InterPro"/>
</dbReference>
<dbReference type="FunFam" id="3.40.50.360:FF:000008">
    <property type="entry name" value="Glutathione-regulated potassium-efflux system ancillary protein KefF"/>
    <property type="match status" value="1"/>
</dbReference>
<dbReference type="Gene3D" id="3.40.50.360">
    <property type="match status" value="1"/>
</dbReference>
<dbReference type="HAMAP" id="MF_01414">
    <property type="entry name" value="K_H_efflux_KefF"/>
    <property type="match status" value="1"/>
</dbReference>
<dbReference type="InterPro" id="IPR003680">
    <property type="entry name" value="Flavodoxin_fold"/>
</dbReference>
<dbReference type="InterPro" id="IPR029039">
    <property type="entry name" value="Flavoprotein-like_sf"/>
</dbReference>
<dbReference type="InterPro" id="IPR023948">
    <property type="entry name" value="K_H_efflux_KefF"/>
</dbReference>
<dbReference type="InterPro" id="IPR046980">
    <property type="entry name" value="KefG/KefF"/>
</dbReference>
<dbReference type="NCBIfam" id="NF002044">
    <property type="entry name" value="PRK00871.1"/>
    <property type="match status" value="1"/>
</dbReference>
<dbReference type="PANTHER" id="PTHR47307:SF2">
    <property type="entry name" value="GLUTATHIONE-REGULATED POTASSIUM-EFFLUX SYSTEM ANCILLARY PROTEIN KEFF"/>
    <property type="match status" value="1"/>
</dbReference>
<dbReference type="PANTHER" id="PTHR47307">
    <property type="entry name" value="GLUTATHIONE-REGULATED POTASSIUM-EFFLUX SYSTEM ANCILLARY PROTEIN KEFG"/>
    <property type="match status" value="1"/>
</dbReference>
<dbReference type="Pfam" id="PF02525">
    <property type="entry name" value="Flavodoxin_2"/>
    <property type="match status" value="1"/>
</dbReference>
<dbReference type="SUPFAM" id="SSF52218">
    <property type="entry name" value="Flavoproteins"/>
    <property type="match status" value="1"/>
</dbReference>
<protein>
    <recommendedName>
        <fullName evidence="1">Glutathione-regulated potassium-efflux system ancillary protein KefF</fullName>
    </recommendedName>
    <alternativeName>
        <fullName evidence="1">Quinone oxidoreductase KefF</fullName>
        <ecNumber evidence="1">1.6.5.2</ecNumber>
    </alternativeName>
</protein>
<organism>
    <name type="scientific">Escherichia coli O157:H7</name>
    <dbReference type="NCBI Taxonomy" id="83334"/>
    <lineage>
        <taxon>Bacteria</taxon>
        <taxon>Pseudomonadati</taxon>
        <taxon>Pseudomonadota</taxon>
        <taxon>Gammaproteobacteria</taxon>
        <taxon>Enterobacterales</taxon>
        <taxon>Enterobacteriaceae</taxon>
        <taxon>Escherichia</taxon>
    </lineage>
</organism>
<feature type="chain" id="PRO_0000071636" description="Glutathione-regulated potassium-efflux system ancillary protein KefF">
    <location>
        <begin position="1"/>
        <end position="176"/>
    </location>
</feature>
<feature type="binding site" evidence="1">
    <location>
        <position position="8"/>
    </location>
    <ligand>
        <name>FMN</name>
        <dbReference type="ChEBI" id="CHEBI:58210"/>
    </ligand>
</feature>
<feature type="binding site" evidence="1">
    <location>
        <begin position="14"/>
        <end position="17"/>
    </location>
    <ligand>
        <name>FMN</name>
        <dbReference type="ChEBI" id="CHEBI:58210"/>
    </ligand>
</feature>
<feature type="binding site" evidence="1">
    <location>
        <begin position="65"/>
        <end position="68"/>
    </location>
    <ligand>
        <name>FMN</name>
        <dbReference type="ChEBI" id="CHEBI:58210"/>
    </ligand>
</feature>
<feature type="binding site" evidence="1">
    <location>
        <begin position="105"/>
        <end position="108"/>
    </location>
    <ligand>
        <name>FMN</name>
        <dbReference type="ChEBI" id="CHEBI:58210"/>
    </ligand>
</feature>
<evidence type="ECO:0000255" key="1">
    <source>
        <dbReference type="HAMAP-Rule" id="MF_01414"/>
    </source>
</evidence>
<reference key="1">
    <citation type="journal article" date="2001" name="Nature">
        <title>Genome sequence of enterohaemorrhagic Escherichia coli O157:H7.</title>
        <authorList>
            <person name="Perna N.T."/>
            <person name="Plunkett G. III"/>
            <person name="Burland V."/>
            <person name="Mau B."/>
            <person name="Glasner J.D."/>
            <person name="Rose D.J."/>
            <person name="Mayhew G.F."/>
            <person name="Evans P.S."/>
            <person name="Gregor J."/>
            <person name="Kirkpatrick H.A."/>
            <person name="Posfai G."/>
            <person name="Hackett J."/>
            <person name="Klink S."/>
            <person name="Boutin A."/>
            <person name="Shao Y."/>
            <person name="Miller L."/>
            <person name="Grotbeck E.J."/>
            <person name="Davis N.W."/>
            <person name="Lim A."/>
            <person name="Dimalanta E.T."/>
            <person name="Potamousis K."/>
            <person name="Apodaca J."/>
            <person name="Anantharaman T.S."/>
            <person name="Lin J."/>
            <person name="Yen G."/>
            <person name="Schwartz D.C."/>
            <person name="Welch R.A."/>
            <person name="Blattner F.R."/>
        </authorList>
    </citation>
    <scope>NUCLEOTIDE SEQUENCE [LARGE SCALE GENOMIC DNA]</scope>
    <source>
        <strain>O157:H7 / EDL933 / ATCC 700927 / EHEC</strain>
    </source>
</reference>
<reference key="2">
    <citation type="journal article" date="2001" name="DNA Res.">
        <title>Complete genome sequence of enterohemorrhagic Escherichia coli O157:H7 and genomic comparison with a laboratory strain K-12.</title>
        <authorList>
            <person name="Hayashi T."/>
            <person name="Makino K."/>
            <person name="Ohnishi M."/>
            <person name="Kurokawa K."/>
            <person name="Ishii K."/>
            <person name="Yokoyama K."/>
            <person name="Han C.-G."/>
            <person name="Ohtsubo E."/>
            <person name="Nakayama K."/>
            <person name="Murata T."/>
            <person name="Tanaka M."/>
            <person name="Tobe T."/>
            <person name="Iida T."/>
            <person name="Takami H."/>
            <person name="Honda T."/>
            <person name="Sasakawa C."/>
            <person name="Ogasawara N."/>
            <person name="Yasunaga T."/>
            <person name="Kuhara S."/>
            <person name="Shiba T."/>
            <person name="Hattori M."/>
            <person name="Shinagawa H."/>
        </authorList>
    </citation>
    <scope>NUCLEOTIDE SEQUENCE [LARGE SCALE GENOMIC DNA]</scope>
    <source>
        <strain>O157:H7 / Sakai / RIMD 0509952 / EHEC</strain>
    </source>
</reference>
<accession>Q8XA24</accession>
<proteinExistence type="inferred from homology"/>
<keyword id="KW-0997">Cell inner membrane</keyword>
<keyword id="KW-1003">Cell membrane</keyword>
<keyword id="KW-0285">Flavoprotein</keyword>
<keyword id="KW-0288">FMN</keyword>
<keyword id="KW-0472">Membrane</keyword>
<keyword id="KW-0520">NAD</keyword>
<keyword id="KW-0560">Oxidoreductase</keyword>
<keyword id="KW-1185">Reference proteome</keyword>
<sequence length="176" mass="20204">MILIIYAHPYPHHSHANKRMFEQARTLEGVEIRSLYQLYPDFNIDIAAEQEALSRADLIVWQHPMQWYSIPPLLKLWIDKVFSHGWAYGHGGTALHGKHLLWAVTTGGGESHFEIGAHPGFDVLSQPLQATAIYCGLNWLPPFAMHCTFICDDETLEGQARHYKQRLLEWQEAHHG</sequence>